<keyword id="KW-0456">Lyase</keyword>
<keyword id="KW-0659">Purine metabolism</keyword>
<protein>
    <recommendedName>
        <fullName evidence="1">Ureidoglycolate lyase</fullName>
        <ecNumber evidence="1">4.3.2.3</ecNumber>
    </recommendedName>
    <alternativeName>
        <fullName evidence="1">Ureidoglycolatase</fullName>
    </alternativeName>
</protein>
<organism>
    <name type="scientific">Pseudomonas fluorescens (strain ATCC BAA-477 / NRRL B-23932 / Pf-5)</name>
    <dbReference type="NCBI Taxonomy" id="220664"/>
    <lineage>
        <taxon>Bacteria</taxon>
        <taxon>Pseudomonadati</taxon>
        <taxon>Pseudomonadota</taxon>
        <taxon>Gammaproteobacteria</taxon>
        <taxon>Pseudomonadales</taxon>
        <taxon>Pseudomonadaceae</taxon>
        <taxon>Pseudomonas</taxon>
    </lineage>
</organism>
<comment type="function">
    <text evidence="1">Catalyzes the catabolism of the allantoin degradation intermediate (S)-ureidoglycolate, generating urea and glyoxylate. Involved in the utilization of allantoin as nitrogen source.</text>
</comment>
<comment type="catalytic activity">
    <reaction evidence="1">
        <text>(S)-ureidoglycolate = urea + glyoxylate</text>
        <dbReference type="Rhea" id="RHEA:11304"/>
        <dbReference type="ChEBI" id="CHEBI:16199"/>
        <dbReference type="ChEBI" id="CHEBI:36655"/>
        <dbReference type="ChEBI" id="CHEBI:57296"/>
        <dbReference type="EC" id="4.3.2.3"/>
    </reaction>
</comment>
<comment type="cofactor">
    <cofactor evidence="1">
        <name>Ni(2+)</name>
        <dbReference type="ChEBI" id="CHEBI:49786"/>
    </cofactor>
</comment>
<comment type="pathway">
    <text evidence="1">Nitrogen metabolism; (S)-allantoin degradation.</text>
</comment>
<comment type="subunit">
    <text evidence="1">Homodimer.</text>
</comment>
<comment type="similarity">
    <text evidence="1">Belongs to the ureidoglycolate lyase family.</text>
</comment>
<gene>
    <name evidence="1" type="primary">allA</name>
    <name type="ordered locus">PFL_4369</name>
</gene>
<dbReference type="EC" id="4.3.2.3" evidence="1"/>
<dbReference type="EMBL" id="CP000076">
    <property type="protein sequence ID" value="AAY93624.1"/>
    <property type="molecule type" value="Genomic_DNA"/>
</dbReference>
<dbReference type="RefSeq" id="WP_011062639.1">
    <property type="nucleotide sequence ID" value="NC_004129.6"/>
</dbReference>
<dbReference type="SMR" id="Q4K8H2"/>
<dbReference type="STRING" id="220664.PFL_4369"/>
<dbReference type="KEGG" id="pfl:PFL_4369"/>
<dbReference type="PATRIC" id="fig|220664.5.peg.4476"/>
<dbReference type="eggNOG" id="COG3194">
    <property type="taxonomic scope" value="Bacteria"/>
</dbReference>
<dbReference type="HOGENOM" id="CLU_070848_1_0_6"/>
<dbReference type="UniPathway" id="UPA00395"/>
<dbReference type="Proteomes" id="UP000008540">
    <property type="component" value="Chromosome"/>
</dbReference>
<dbReference type="GO" id="GO:0004848">
    <property type="term" value="F:ureidoglycolate hydrolase activity"/>
    <property type="evidence" value="ECO:0007669"/>
    <property type="project" value="InterPro"/>
</dbReference>
<dbReference type="GO" id="GO:0050385">
    <property type="term" value="F:ureidoglycolate lyase activity"/>
    <property type="evidence" value="ECO:0007669"/>
    <property type="project" value="UniProtKB-UniRule"/>
</dbReference>
<dbReference type="GO" id="GO:0000256">
    <property type="term" value="P:allantoin catabolic process"/>
    <property type="evidence" value="ECO:0007669"/>
    <property type="project" value="UniProtKB-UniRule"/>
</dbReference>
<dbReference type="GO" id="GO:0006145">
    <property type="term" value="P:purine nucleobase catabolic process"/>
    <property type="evidence" value="ECO:0007669"/>
    <property type="project" value="UniProtKB-UniRule"/>
</dbReference>
<dbReference type="CDD" id="cd20298">
    <property type="entry name" value="cupin_UAH"/>
    <property type="match status" value="1"/>
</dbReference>
<dbReference type="Gene3D" id="2.60.120.480">
    <property type="entry name" value="Ureidoglycolate hydrolase"/>
    <property type="match status" value="1"/>
</dbReference>
<dbReference type="HAMAP" id="MF_00616">
    <property type="entry name" value="Ureidogly_lyase"/>
    <property type="match status" value="1"/>
</dbReference>
<dbReference type="InterPro" id="IPR011051">
    <property type="entry name" value="RmlC_Cupin_sf"/>
</dbReference>
<dbReference type="InterPro" id="IPR047233">
    <property type="entry name" value="UAH_cupin"/>
</dbReference>
<dbReference type="InterPro" id="IPR007247">
    <property type="entry name" value="Ureidogly_lyase"/>
</dbReference>
<dbReference type="InterPro" id="IPR023525">
    <property type="entry name" value="Ureidogly_lyase_bac"/>
</dbReference>
<dbReference type="InterPro" id="IPR024060">
    <property type="entry name" value="Ureidoglycolate_lyase_dom_sf"/>
</dbReference>
<dbReference type="NCBIfam" id="NF002949">
    <property type="entry name" value="PRK03606.1-2"/>
    <property type="match status" value="1"/>
</dbReference>
<dbReference type="NCBIfam" id="NF009932">
    <property type="entry name" value="PRK13395.1"/>
    <property type="match status" value="1"/>
</dbReference>
<dbReference type="PANTHER" id="PTHR21221">
    <property type="entry name" value="UREIDOGLYCOLATE HYDROLASE"/>
    <property type="match status" value="1"/>
</dbReference>
<dbReference type="PANTHER" id="PTHR21221:SF1">
    <property type="entry name" value="UREIDOGLYCOLATE LYASE"/>
    <property type="match status" value="1"/>
</dbReference>
<dbReference type="Pfam" id="PF04115">
    <property type="entry name" value="Ureidogly_lyase"/>
    <property type="match status" value="1"/>
</dbReference>
<dbReference type="PIRSF" id="PIRSF017306">
    <property type="entry name" value="Ureidogly_hydro"/>
    <property type="match status" value="1"/>
</dbReference>
<dbReference type="SUPFAM" id="SSF51182">
    <property type="entry name" value="RmlC-like cupins"/>
    <property type="match status" value="1"/>
</dbReference>
<proteinExistence type="inferred from homology"/>
<feature type="chain" id="PRO_1000061362" description="Ureidoglycolate lyase">
    <location>
        <begin position="1"/>
        <end position="167"/>
    </location>
</feature>
<accession>Q4K8H2</accession>
<evidence type="ECO:0000255" key="1">
    <source>
        <dbReference type="HAMAP-Rule" id="MF_00616"/>
    </source>
</evidence>
<reference key="1">
    <citation type="journal article" date="2005" name="Nat. Biotechnol.">
        <title>Complete genome sequence of the plant commensal Pseudomonas fluorescens Pf-5.</title>
        <authorList>
            <person name="Paulsen I.T."/>
            <person name="Press C.M."/>
            <person name="Ravel J."/>
            <person name="Kobayashi D.Y."/>
            <person name="Myers G.S.A."/>
            <person name="Mavrodi D.V."/>
            <person name="DeBoy R.T."/>
            <person name="Seshadri R."/>
            <person name="Ren Q."/>
            <person name="Madupu R."/>
            <person name="Dodson R.J."/>
            <person name="Durkin A.S."/>
            <person name="Brinkac L.M."/>
            <person name="Daugherty S.C."/>
            <person name="Sullivan S.A."/>
            <person name="Rosovitz M.J."/>
            <person name="Gwinn M.L."/>
            <person name="Zhou L."/>
            <person name="Schneider D.J."/>
            <person name="Cartinhour S.W."/>
            <person name="Nelson W.C."/>
            <person name="Weidman J."/>
            <person name="Watkins K."/>
            <person name="Tran K."/>
            <person name="Khouri H."/>
            <person name="Pierson E.A."/>
            <person name="Pierson L.S. III"/>
            <person name="Thomashow L.S."/>
            <person name="Loper J.E."/>
        </authorList>
    </citation>
    <scope>NUCLEOTIDE SEQUENCE [LARGE SCALE GENOMIC DNA]</scope>
    <source>
        <strain>ATCC BAA-477 / NRRL B-23932 / Pf-5</strain>
    </source>
</reference>
<sequence length="167" mass="18740">MRTLVIEPLSKEAFAPFGDVIETDGSDHFMINNGSTMRFHRLATVETAQPEDQAIISIFRADALDMPLTIRMLERHPLGSQAFIPLLGNPFLIVVAPLGDEPVSGLVRAFVSNGRQGINYHRGVWHHPVLTIEKRDDFLVVDRSGTGNNCDEHFFKEDERLILAPHQ</sequence>
<name>ALLA_PSEF5</name>